<evidence type="ECO:0000250" key="1"/>
<evidence type="ECO:0000305" key="2"/>
<proteinExistence type="inferred from homology"/>
<protein>
    <recommendedName>
        <fullName>Amino-acid acetyltransferase</fullName>
        <ecNumber>2.3.1.1</ecNumber>
    </recommendedName>
    <alternativeName>
        <fullName>N-acetylglutamate synthase</fullName>
        <shortName>AGS</shortName>
        <shortName>NAGS</shortName>
    </alternativeName>
</protein>
<sequence>MRERTTELVQGFRHSVPYINAHRGKKFVIMLSGEAIKYGNFSGIINDIGLLHSLGIRLIVVYGSCPQINANLKEKNIKITYHKYIRVTDLLSLEQVKQAAGRLQLDITARLSMSLSNTPLQGANINVVSGNFIIAQPLGVDDGIDYCHSGRIRRIDKKAINCQLENGAIVLIGPVAVSVTGESFNLTSEEIATQVSIKLKAEKMIGFCSKQGVIDSQGKTISELLPNNIQNEIKKLEGKGDYISSTIRFLRGSIKACKSGVNRSHLISYHKNGALLQELFSRDGIGTQMVMESAEKIRQANINDIGGILELIRPLEKKGILVRRSREQLEMEVDKFTIIERDNLTIACAALYPFFKEKIGEMACVAVHPDYRNSSRGDLLLQTMKLNAKKLNLKKIFVLTTQSIHWFQERGFILVDVEILPESKKKMYNYQRCSKILMIDLF</sequence>
<dbReference type="EC" id="2.3.1.1"/>
<dbReference type="EMBL" id="AE013218">
    <property type="protein sequence ID" value="AAM67984.1"/>
    <property type="molecule type" value="Genomic_DNA"/>
</dbReference>
<dbReference type="RefSeq" id="WP_011053951.1">
    <property type="nucleotide sequence ID" value="NC_004061.1"/>
</dbReference>
<dbReference type="SMR" id="P59099"/>
<dbReference type="STRING" id="198804.BUsg_441"/>
<dbReference type="GeneID" id="93003913"/>
<dbReference type="KEGG" id="bas:BUsg_441"/>
<dbReference type="eggNOG" id="COG0548">
    <property type="taxonomic scope" value="Bacteria"/>
</dbReference>
<dbReference type="eggNOG" id="COG1246">
    <property type="taxonomic scope" value="Bacteria"/>
</dbReference>
<dbReference type="HOGENOM" id="CLU_024773_0_0_6"/>
<dbReference type="UniPathway" id="UPA00068">
    <property type="reaction ID" value="UER00106"/>
</dbReference>
<dbReference type="Proteomes" id="UP000000416">
    <property type="component" value="Chromosome"/>
</dbReference>
<dbReference type="GO" id="GO:0005737">
    <property type="term" value="C:cytoplasm"/>
    <property type="evidence" value="ECO:0007669"/>
    <property type="project" value="UniProtKB-SubCell"/>
</dbReference>
<dbReference type="GO" id="GO:0004042">
    <property type="term" value="F:L-glutamate N-acetyltransferase activity"/>
    <property type="evidence" value="ECO:0007669"/>
    <property type="project" value="UniProtKB-UniRule"/>
</dbReference>
<dbReference type="GO" id="GO:0006526">
    <property type="term" value="P:L-arginine biosynthetic process"/>
    <property type="evidence" value="ECO:0007669"/>
    <property type="project" value="UniProtKB-UniRule"/>
</dbReference>
<dbReference type="CDD" id="cd04237">
    <property type="entry name" value="AAK_NAGS-ABP"/>
    <property type="match status" value="1"/>
</dbReference>
<dbReference type="CDD" id="cd04301">
    <property type="entry name" value="NAT_SF"/>
    <property type="match status" value="1"/>
</dbReference>
<dbReference type="FunFam" id="3.40.1160.10:FF:000005">
    <property type="entry name" value="Amino-acid acetyltransferase"/>
    <property type="match status" value="1"/>
</dbReference>
<dbReference type="FunFam" id="3.40.630.30:FF:000009">
    <property type="entry name" value="Amino-acid acetyltransferase"/>
    <property type="match status" value="1"/>
</dbReference>
<dbReference type="Gene3D" id="3.40.630.30">
    <property type="match status" value="1"/>
</dbReference>
<dbReference type="Gene3D" id="3.40.1160.10">
    <property type="entry name" value="Acetylglutamate kinase-like"/>
    <property type="match status" value="1"/>
</dbReference>
<dbReference type="HAMAP" id="MF_01105">
    <property type="entry name" value="N_acetyl_glu_synth"/>
    <property type="match status" value="1"/>
</dbReference>
<dbReference type="InterPro" id="IPR036393">
    <property type="entry name" value="AceGlu_kinase-like_sf"/>
</dbReference>
<dbReference type="InterPro" id="IPR016181">
    <property type="entry name" value="Acyl_CoA_acyltransferase"/>
</dbReference>
<dbReference type="InterPro" id="IPR001048">
    <property type="entry name" value="Asp/Glu/Uridylate_kinase"/>
</dbReference>
<dbReference type="InterPro" id="IPR000182">
    <property type="entry name" value="GNAT_dom"/>
</dbReference>
<dbReference type="InterPro" id="IPR033719">
    <property type="entry name" value="NAGS_kin"/>
</dbReference>
<dbReference type="InterPro" id="IPR010167">
    <property type="entry name" value="NH2A_AcTrfase"/>
</dbReference>
<dbReference type="NCBIfam" id="TIGR01890">
    <property type="entry name" value="N-Ac-Glu-synth"/>
    <property type="match status" value="1"/>
</dbReference>
<dbReference type="NCBIfam" id="NF003641">
    <property type="entry name" value="PRK05279.1"/>
    <property type="match status" value="1"/>
</dbReference>
<dbReference type="PANTHER" id="PTHR30602">
    <property type="entry name" value="AMINO-ACID ACETYLTRANSFERASE"/>
    <property type="match status" value="1"/>
</dbReference>
<dbReference type="PANTHER" id="PTHR30602:SF12">
    <property type="entry name" value="AMINO-ACID ACETYLTRANSFERASE NAGS1, CHLOROPLASTIC-RELATED"/>
    <property type="match status" value="1"/>
</dbReference>
<dbReference type="Pfam" id="PF00696">
    <property type="entry name" value="AA_kinase"/>
    <property type="match status" value="1"/>
</dbReference>
<dbReference type="Pfam" id="PF13508">
    <property type="entry name" value="Acetyltransf_7"/>
    <property type="match status" value="1"/>
</dbReference>
<dbReference type="PIRSF" id="PIRSF000423">
    <property type="entry name" value="ArgA"/>
    <property type="match status" value="1"/>
</dbReference>
<dbReference type="SUPFAM" id="SSF55729">
    <property type="entry name" value="Acyl-CoA N-acyltransferases (Nat)"/>
    <property type="match status" value="1"/>
</dbReference>
<dbReference type="SUPFAM" id="SSF53633">
    <property type="entry name" value="Carbamate kinase-like"/>
    <property type="match status" value="1"/>
</dbReference>
<dbReference type="PROSITE" id="PS51186">
    <property type="entry name" value="GNAT"/>
    <property type="match status" value="1"/>
</dbReference>
<accession>P59099</accession>
<keyword id="KW-0012">Acyltransferase</keyword>
<keyword id="KW-0028">Amino-acid biosynthesis</keyword>
<keyword id="KW-0055">Arginine biosynthesis</keyword>
<keyword id="KW-0963">Cytoplasm</keyword>
<keyword id="KW-0808">Transferase</keyword>
<comment type="catalytic activity">
    <reaction>
        <text>L-glutamate + acetyl-CoA = N-acetyl-L-glutamate + CoA + H(+)</text>
        <dbReference type="Rhea" id="RHEA:24292"/>
        <dbReference type="ChEBI" id="CHEBI:15378"/>
        <dbReference type="ChEBI" id="CHEBI:29985"/>
        <dbReference type="ChEBI" id="CHEBI:44337"/>
        <dbReference type="ChEBI" id="CHEBI:57287"/>
        <dbReference type="ChEBI" id="CHEBI:57288"/>
        <dbReference type="EC" id="2.3.1.1"/>
    </reaction>
</comment>
<comment type="pathway">
    <text>Amino-acid biosynthesis; L-arginine biosynthesis; N(2)-acetyl-L-ornithine from L-glutamate: step 1/4.</text>
</comment>
<comment type="subunit">
    <text evidence="1">Homohexamer.</text>
</comment>
<comment type="subcellular location">
    <subcellularLocation>
        <location evidence="1">Cytoplasm</location>
    </subcellularLocation>
</comment>
<comment type="similarity">
    <text evidence="2">Belongs to the acetyltransferase family. ArgA subfamily.</text>
</comment>
<name>ARGA_BUCAP</name>
<reference key="1">
    <citation type="journal article" date="2002" name="Science">
        <title>50 million years of genomic stasis in endosymbiotic bacteria.</title>
        <authorList>
            <person name="Tamas I."/>
            <person name="Klasson L."/>
            <person name="Canbaeck B."/>
            <person name="Naeslund A.K."/>
            <person name="Eriksson A.-S."/>
            <person name="Wernegreen J.J."/>
            <person name="Sandstroem J.P."/>
            <person name="Moran N.A."/>
            <person name="Andersson S.G.E."/>
        </authorList>
    </citation>
    <scope>NUCLEOTIDE SEQUENCE [LARGE SCALE GENOMIC DNA]</scope>
    <source>
        <strain>Sg</strain>
    </source>
</reference>
<gene>
    <name type="primary">argA</name>
    <name type="ordered locus">BUsg_441</name>
</gene>
<organism>
    <name type="scientific">Buchnera aphidicola subsp. Schizaphis graminum (strain Sg)</name>
    <dbReference type="NCBI Taxonomy" id="198804"/>
    <lineage>
        <taxon>Bacteria</taxon>
        <taxon>Pseudomonadati</taxon>
        <taxon>Pseudomonadota</taxon>
        <taxon>Gammaproteobacteria</taxon>
        <taxon>Enterobacterales</taxon>
        <taxon>Erwiniaceae</taxon>
        <taxon>Buchnera</taxon>
    </lineage>
</organism>
<feature type="chain" id="PRO_0000186789" description="Amino-acid acetyltransferase">
    <location>
        <begin position="1"/>
        <end position="442"/>
    </location>
</feature>
<feature type="domain" description="N-acetyltransferase">
    <location>
        <begin position="295"/>
        <end position="442"/>
    </location>
</feature>